<keyword id="KW-1064">Adaptive immunity</keyword>
<keyword id="KW-1003">Cell membrane</keyword>
<keyword id="KW-1015">Disulfide bond</keyword>
<keyword id="KW-0391">Immunity</keyword>
<keyword id="KW-0393">Immunoglobulin domain</keyword>
<keyword id="KW-0472">Membrane</keyword>
<keyword id="KW-0675">Receptor</keyword>
<keyword id="KW-1185">Reference proteome</keyword>
<keyword id="KW-0732">Signal</keyword>
<keyword id="KW-1279">T cell receptor</keyword>
<comment type="function">
    <text evidence="3 5 6 7">V region of the variable domain of T cell receptor (TR) beta chain that participates in the antigen recognition (PubMed:24600447). Alpha-beta T cell receptors are antigen specific receptors which are essential to the immune response and are present on the cell surface of T lymphocytes. Recognize peptide-major histocompatibility (MH) (pMH) complexes that are displayed by antigen presenting cells (APC), a prerequisite for efficient T cell adaptive immunity against pathogens (PubMed:25493333). Binding of alpha-beta TR to pMH complex initiates TR-CD3 clustering on the cell surface and intracellular activation of LCK that phosphorylates the ITAM motifs of CD3G, CD3D, CD3E and CD247 enabling the recruitment of ZAP70. In turn ZAP70 phosphorylates LAT, which recruits numerous signaling molecules to form the LAT signalosome. The LAT signalosome propagates signal branching to three major signaling pathways, the calcium, the mitogen-activated protein kinase (MAPK) kinase and the nuclear factor NF-kappa-B (NF-kB) pathways, leading to the mobilization of transcription factors that are critical for gene expression and essential for T cell growth and differentiation (PubMed:23524462). The T cell repertoire is generated in the thymus, by V-(D)-J rearrangement. This repertoire is then shaped by intrathymic selection events to generate a peripheral T cell pool of self-MH restricted, non-autoaggressive T cells. Post-thymic interaction of alpha-beta TR with the pMH complexes shapes TR structural and functional avidity (PubMed:15040585).</text>
</comment>
<comment type="subunit">
    <text evidence="4">Alpha-beta TR is a heterodimer composed of an alpha and beta chain; disulfide-linked. The alpha-beta TR is associated with the transmembrane signaling CD3 coreceptor proteins to form the TR-CD3 (TcR or TCR). The assembly of alpha-beta TR heterodimers with CD3 occurs in the endoplasmic reticulum where a single alpha-beta TR heterodimer associates with one CD3D-CD3E heterodimer, one CD3G-CD3E heterodimer and one CD247 homodimer forming a stable octameric structure. CD3D-CD3E and CD3G-CD3E heterodimers preferentially associate with TR alpha and TR beta chains, respectively. The association of the CD247 homodimer is the last step of TcR assembly in the endoplasmic reticulum and is required for transport to the cell surface.</text>
</comment>
<comment type="subcellular location">
    <subcellularLocation>
        <location evidence="4">Cell membrane</location>
    </subcellularLocation>
</comment>
<comment type="polymorphism">
    <text evidence="10">There are several alleles. The sequence shown is that of IMGT allele TRBV11-3*01.</text>
</comment>
<dbReference type="EMBL" id="L36092">
    <property type="protein sequence ID" value="AAC13335.1"/>
    <property type="molecule type" value="Genomic_DNA"/>
</dbReference>
<dbReference type="EMBL" id="AC244196">
    <property type="status" value="NOT_ANNOTATED_CDS"/>
    <property type="molecule type" value="Genomic_DNA"/>
</dbReference>
<dbReference type="SMR" id="A0A5A6"/>
<dbReference type="FunCoup" id="A0A5A6">
    <property type="interactions" value="379"/>
</dbReference>
<dbReference type="IMGT_GENE-DB" id="TRBV11-3"/>
<dbReference type="GlyGen" id="A0A5A6">
    <property type="glycosylation" value="1 site, 1 O-linked glycan (1 site)"/>
</dbReference>
<dbReference type="BioMuta" id="ENSG00000276597"/>
<dbReference type="Ensembl" id="ENST00000611787.1">
    <property type="protein sequence ID" value="ENSP00000480080.1"/>
    <property type="gene ID" value="ENSG00000276597.1"/>
</dbReference>
<dbReference type="Ensembl" id="ENST00000634111.1">
    <property type="protein sequence ID" value="ENSP00000487749.1"/>
    <property type="gene ID" value="ENSG00000282242.1"/>
</dbReference>
<dbReference type="UCSC" id="uc033amc.2">
    <property type="organism name" value="human"/>
</dbReference>
<dbReference type="AGR" id="HGNC:12182"/>
<dbReference type="GeneCards" id="TRBV11-3"/>
<dbReference type="HGNC" id="HGNC:12182">
    <property type="gene designation" value="TRBV11-3"/>
</dbReference>
<dbReference type="HPA" id="ENSG00000276597">
    <property type="expression patterns" value="Tissue enriched (lymphoid)"/>
</dbReference>
<dbReference type="neXtProt" id="NX_A0A5A6"/>
<dbReference type="OpenTargets" id="ENSG00000276597"/>
<dbReference type="VEuPathDB" id="HostDB:ENSG00000276597"/>
<dbReference type="GeneTree" id="ENSGT00940000164371"/>
<dbReference type="HOGENOM" id="CLU_077975_9_4_1"/>
<dbReference type="InParanoid" id="A0A5A6"/>
<dbReference type="OMA" id="NTLYWYL"/>
<dbReference type="OrthoDB" id="9631130at2759"/>
<dbReference type="PAN-GO" id="A0A5A6">
    <property type="GO annotations" value="2 GO annotations based on evolutionary models"/>
</dbReference>
<dbReference type="PhylomeDB" id="A0A5A6"/>
<dbReference type="ChiTaRS" id="TRBV11-3">
    <property type="organism name" value="human"/>
</dbReference>
<dbReference type="Pharos" id="A0A5A6">
    <property type="development level" value="Tdark"/>
</dbReference>
<dbReference type="PRO" id="PR:A0A5A6"/>
<dbReference type="Proteomes" id="UP000005640">
    <property type="component" value="Chromosome 7"/>
</dbReference>
<dbReference type="RNAct" id="A0A5A6">
    <property type="molecule type" value="protein"/>
</dbReference>
<dbReference type="Bgee" id="ENSG00000276597">
    <property type="expression patterns" value="Expressed in vermiform appendix and 58 other cell types or tissues"/>
</dbReference>
<dbReference type="GO" id="GO:0005886">
    <property type="term" value="C:plasma membrane"/>
    <property type="evidence" value="ECO:0000318"/>
    <property type="project" value="GO_Central"/>
</dbReference>
<dbReference type="GO" id="GO:0042101">
    <property type="term" value="C:T cell receptor complex"/>
    <property type="evidence" value="ECO:0007669"/>
    <property type="project" value="UniProtKB-KW"/>
</dbReference>
<dbReference type="GO" id="GO:0002250">
    <property type="term" value="P:adaptive immune response"/>
    <property type="evidence" value="ECO:0007669"/>
    <property type="project" value="UniProtKB-KW"/>
</dbReference>
<dbReference type="GO" id="GO:0007166">
    <property type="term" value="P:cell surface receptor signaling pathway"/>
    <property type="evidence" value="ECO:0000318"/>
    <property type="project" value="GO_Central"/>
</dbReference>
<dbReference type="Gene3D" id="2.60.40.10">
    <property type="entry name" value="Immunoglobulins"/>
    <property type="match status" value="1"/>
</dbReference>
<dbReference type="InterPro" id="IPR036179">
    <property type="entry name" value="Ig-like_dom_sf"/>
</dbReference>
<dbReference type="InterPro" id="IPR013783">
    <property type="entry name" value="Ig-like_fold"/>
</dbReference>
<dbReference type="InterPro" id="IPR013106">
    <property type="entry name" value="Ig_V-set"/>
</dbReference>
<dbReference type="InterPro" id="IPR050413">
    <property type="entry name" value="TCR_beta_variable"/>
</dbReference>
<dbReference type="PANTHER" id="PTHR23268:SF97">
    <property type="entry name" value="T CELL RECEPTOR BETA VARIABLE 11-3"/>
    <property type="match status" value="1"/>
</dbReference>
<dbReference type="PANTHER" id="PTHR23268">
    <property type="entry name" value="T-CELL RECEPTOR BETA CHAIN"/>
    <property type="match status" value="1"/>
</dbReference>
<dbReference type="Pfam" id="PF07686">
    <property type="entry name" value="V-set"/>
    <property type="match status" value="1"/>
</dbReference>
<dbReference type="SUPFAM" id="SSF48726">
    <property type="entry name" value="Immunoglobulin"/>
    <property type="match status" value="1"/>
</dbReference>
<protein>
    <recommendedName>
        <fullName evidence="9">T cell receptor beta variable 11-3</fullName>
    </recommendedName>
</protein>
<feature type="signal peptide" evidence="1">
    <location>
        <begin position="1"/>
        <end position="21"/>
    </location>
</feature>
<feature type="chain" id="PRO_5014083214" description="T cell receptor beta variable 11-3" evidence="1">
    <location>
        <begin position="22"/>
        <end position="115"/>
    </location>
</feature>
<feature type="domain" description="Ig-like" evidence="2">
    <location>
        <begin position="22"/>
        <end position="115" status="greater than"/>
    </location>
</feature>
<feature type="disulfide bond" evidence="2">
    <location>
        <begin position="42"/>
        <end position="111"/>
    </location>
</feature>
<feature type="non-terminal residue">
    <location>
        <position position="115"/>
    </location>
</feature>
<gene>
    <name evidence="9" type="primary">TRBV11-3</name>
    <name evidence="8" type="synonym">TCRBV21S2A2</name>
</gene>
<accession>A0A5A6</accession>
<proteinExistence type="inferred from homology"/>
<evidence type="ECO:0000255" key="1"/>
<evidence type="ECO:0000255" key="2">
    <source>
        <dbReference type="PROSITE-ProRule" id="PRU00114"/>
    </source>
</evidence>
<evidence type="ECO:0000303" key="3">
    <source>
    </source>
</evidence>
<evidence type="ECO:0000303" key="4">
    <source>
    </source>
</evidence>
<evidence type="ECO:0000303" key="5">
    <source>
    </source>
</evidence>
<evidence type="ECO:0000303" key="6">
    <source>
    </source>
</evidence>
<evidence type="ECO:0000303" key="7">
    <source>
    </source>
</evidence>
<evidence type="ECO:0000303" key="8">
    <source>
    </source>
</evidence>
<evidence type="ECO:0000303" key="9">
    <source ref="3"/>
</evidence>
<evidence type="ECO:0000305" key="10"/>
<organism>
    <name type="scientific">Homo sapiens</name>
    <name type="common">Human</name>
    <dbReference type="NCBI Taxonomy" id="9606"/>
    <lineage>
        <taxon>Eukaryota</taxon>
        <taxon>Metazoa</taxon>
        <taxon>Chordata</taxon>
        <taxon>Craniata</taxon>
        <taxon>Vertebrata</taxon>
        <taxon>Euteleostomi</taxon>
        <taxon>Mammalia</taxon>
        <taxon>Eutheria</taxon>
        <taxon>Euarchontoglires</taxon>
        <taxon>Primates</taxon>
        <taxon>Haplorrhini</taxon>
        <taxon>Catarrhini</taxon>
        <taxon>Hominidae</taxon>
        <taxon>Homo</taxon>
    </lineage>
</organism>
<sequence length="115" mass="12990">MGTRLLCWVAFCLLVEELIEAGVVQSPRYKIIEKKQPVAFWCNPISGHNTLYWYLQNLGQGPELLIRYENEEAVDDSQLPKDRFSAERLKGVDSTLKIQPAELGDSAVYLCASSL</sequence>
<name>TVBK3_HUMAN</name>
<reference key="1">
    <citation type="journal article" date="1996" name="Science">
        <title>The complete 685-kilobase DNA sequence of the human beta T cell receptor locus.</title>
        <authorList>
            <person name="Rowen L."/>
            <person name="Koop B.F."/>
            <person name="Hood L."/>
        </authorList>
    </citation>
    <scope>NUCLEOTIDE SEQUENCE [GENOMIC DNA] (IMGT ALLELE TRBV11-3*01)</scope>
</reference>
<reference key="2">
    <citation type="journal article" date="2003" name="Nature">
        <title>The DNA sequence of human chromosome 7.</title>
        <authorList>
            <person name="Hillier L.W."/>
            <person name="Fulton R.S."/>
            <person name="Fulton L.A."/>
            <person name="Graves T.A."/>
            <person name="Pepin K.H."/>
            <person name="Wagner-McPherson C."/>
            <person name="Layman D."/>
            <person name="Maas J."/>
            <person name="Jaeger S."/>
            <person name="Walker R."/>
            <person name="Wylie K."/>
            <person name="Sekhon M."/>
            <person name="Becker M.C."/>
            <person name="O'Laughlin M.D."/>
            <person name="Schaller M.E."/>
            <person name="Fewell G.A."/>
            <person name="Delehaunty K.D."/>
            <person name="Miner T.L."/>
            <person name="Nash W.E."/>
            <person name="Cordes M."/>
            <person name="Du H."/>
            <person name="Sun H."/>
            <person name="Edwards J."/>
            <person name="Bradshaw-Cordum H."/>
            <person name="Ali J."/>
            <person name="Andrews S."/>
            <person name="Isak A."/>
            <person name="Vanbrunt A."/>
            <person name="Nguyen C."/>
            <person name="Du F."/>
            <person name="Lamar B."/>
            <person name="Courtney L."/>
            <person name="Kalicki J."/>
            <person name="Ozersky P."/>
            <person name="Bielicki L."/>
            <person name="Scott K."/>
            <person name="Holmes A."/>
            <person name="Harkins R."/>
            <person name="Harris A."/>
            <person name="Strong C.M."/>
            <person name="Hou S."/>
            <person name="Tomlinson C."/>
            <person name="Dauphin-Kohlberg S."/>
            <person name="Kozlowicz-Reilly A."/>
            <person name="Leonard S."/>
            <person name="Rohlfing T."/>
            <person name="Rock S.M."/>
            <person name="Tin-Wollam A.-M."/>
            <person name="Abbott A."/>
            <person name="Minx P."/>
            <person name="Maupin R."/>
            <person name="Strowmatt C."/>
            <person name="Latreille P."/>
            <person name="Miller N."/>
            <person name="Johnson D."/>
            <person name="Murray J."/>
            <person name="Woessner J.P."/>
            <person name="Wendl M.C."/>
            <person name="Yang S.-P."/>
            <person name="Schultz B.R."/>
            <person name="Wallis J.W."/>
            <person name="Spieth J."/>
            <person name="Bieri T.A."/>
            <person name="Nelson J.O."/>
            <person name="Berkowicz N."/>
            <person name="Wohldmann P.E."/>
            <person name="Cook L.L."/>
            <person name="Hickenbotham M.T."/>
            <person name="Eldred J."/>
            <person name="Williams D."/>
            <person name="Bedell J.A."/>
            <person name="Mardis E.R."/>
            <person name="Clifton S.W."/>
            <person name="Chissoe S.L."/>
            <person name="Marra M.A."/>
            <person name="Raymond C."/>
            <person name="Haugen E."/>
            <person name="Gillett W."/>
            <person name="Zhou Y."/>
            <person name="James R."/>
            <person name="Phelps K."/>
            <person name="Iadanoto S."/>
            <person name="Bubb K."/>
            <person name="Simms E."/>
            <person name="Levy R."/>
            <person name="Clendenning J."/>
            <person name="Kaul R."/>
            <person name="Kent W.J."/>
            <person name="Furey T.S."/>
            <person name="Baertsch R.A."/>
            <person name="Brent M.R."/>
            <person name="Keibler E."/>
            <person name="Flicek P."/>
            <person name="Bork P."/>
            <person name="Suyama M."/>
            <person name="Bailey J.A."/>
            <person name="Portnoy M.E."/>
            <person name="Torrents D."/>
            <person name="Chinwalla A.T."/>
            <person name="Gish W.R."/>
            <person name="Eddy S.R."/>
            <person name="McPherson J.D."/>
            <person name="Olson M.V."/>
            <person name="Eichler E.E."/>
            <person name="Green E.D."/>
            <person name="Waterston R.H."/>
            <person name="Wilson R.K."/>
        </authorList>
    </citation>
    <scope>NUCLEOTIDE SEQUENCE [LARGE SCALE GENOMIC DNA] (IMGT ALLELE TRBV11-3*01)</scope>
</reference>
<reference key="3">
    <citation type="book" date="2001" name="The T Cell Receptor FactsBook.">
        <title>The T Cell Receptor FactsBook.</title>
        <editorList>
            <person name="Lefranc M.P."/>
            <person name="Lefranc G."/>
        </editorList>
        <authorList>
            <person name="Lefranc M.P."/>
            <person name="Lefranc G."/>
        </authorList>
    </citation>
    <scope>NOMENCLATURE</scope>
</reference>
<reference key="4">
    <citation type="journal article" date="2004" name="Nat. Rev. Immunol.">
        <title>The many important facets of T-cell repertoire diversity.</title>
        <authorList>
            <person name="Nikolich-Zugich J."/>
            <person name="Slifka M.K."/>
            <person name="Messaoudi I."/>
        </authorList>
    </citation>
    <scope>REVIEW ON T CELL REPERTOIRE DIVERSITY</scope>
</reference>
<reference key="5">
    <citation type="journal article" date="2010" name="Cold Spring Harb. Perspect. Biol.">
        <title>Structural biology of the T-cell receptor: insights into receptor assembly, ligand recognition, and initiation of signaling.</title>
        <authorList>
            <person name="Wucherpfennig K.W."/>
            <person name="Gagnon E."/>
            <person name="Call M.J."/>
            <person name="Huseby E.S."/>
            <person name="Call M.E."/>
        </authorList>
    </citation>
    <scope>REVIEW ON T CELL RECEPTOR-CD3 COMPLEX ASSEMBLY</scope>
    <scope>SUBCELLULAR LOCATION</scope>
</reference>
<reference key="6">
    <citation type="journal article" date="2013" name="Nat. Rev. Immunol.">
        <title>T cell receptor signalling networks: branched, diversified and bounded.</title>
        <authorList>
            <person name="Brownlie R.J."/>
            <person name="Zamoyska R."/>
        </authorList>
    </citation>
    <scope>REVIEW ON T CELL RECEPTOR SIGNALING</scope>
</reference>
<reference key="7">
    <citation type="journal article" date="2014" name="Front. Immunol.">
        <title>Immunoglobulin and T Cell Receptor Genes: IMGT((R)) and the Birth and Rise of Immunoinformatics.</title>
        <authorList>
            <person name="Lefranc M.P."/>
        </authorList>
    </citation>
    <scope>NOMENCLATURE</scope>
</reference>
<reference key="8">
    <citation type="journal article" date="2015" name="Annu. Rev. Immunol.">
        <title>T cell antigen receptor recognition of antigen-presenting molecules.</title>
        <authorList>
            <person name="Rossjohn J."/>
            <person name="Gras S."/>
            <person name="Miles J.J."/>
            <person name="Turner S.J."/>
            <person name="Godfrey D.I."/>
            <person name="McCluskey J."/>
        </authorList>
    </citation>
    <scope>REVIEW ON FUNCTION</scope>
</reference>